<name>DNLJ_CAUVC</name>
<keyword id="KW-0227">DNA damage</keyword>
<keyword id="KW-0234">DNA repair</keyword>
<keyword id="KW-0235">DNA replication</keyword>
<keyword id="KW-0436">Ligase</keyword>
<keyword id="KW-0460">Magnesium</keyword>
<keyword id="KW-0464">Manganese</keyword>
<keyword id="KW-0479">Metal-binding</keyword>
<keyword id="KW-0520">NAD</keyword>
<keyword id="KW-1185">Reference proteome</keyword>
<keyword id="KW-0862">Zinc</keyword>
<organism>
    <name type="scientific">Caulobacter vibrioides (strain ATCC 19089 / CIP 103742 / CB 15)</name>
    <name type="common">Caulobacter crescentus</name>
    <dbReference type="NCBI Taxonomy" id="190650"/>
    <lineage>
        <taxon>Bacteria</taxon>
        <taxon>Pseudomonadati</taxon>
        <taxon>Pseudomonadota</taxon>
        <taxon>Alphaproteobacteria</taxon>
        <taxon>Caulobacterales</taxon>
        <taxon>Caulobacteraceae</taxon>
        <taxon>Caulobacter</taxon>
    </lineage>
</organism>
<sequence length="783" mass="84901">MSQIPVADLTEAQAVEDLERLADLLATHDIAYHQEDNPTVSDAEYDALKRRNLDIETRFPHLVRDNSPSMRVGATRAEQFAPVEHGVPMLSLDNAFSNDEAIEFDARVRRFLRISPSETVAYTAEPKIDGLSASLRYEKGVLVQGATRGDGRVGEDVTANLRTIADIPHRLKGSGWPDVIEVRGEVYVELAAFAAFNKAAEEAGQRTYANPRNFAAGSLRQIDPKISAQRPLRFFGYAWGLVSEGFADSQWGALERLAEWGFVTTAPPAQRVLNAQGLLDIYAQFEVLRPTLGFDIDGVVYKVDDLELQRRLGFVSRSPRWAIARKFPAQRARTVLEAIDLQVGRTGAITPVARLKPVTVGGVSVTNATLHNGDEIARLDVRVGDTVVIQRAGDVIPQIVEVALDARPDPAPPPYEFPHVCPCPLQTPLAREVTASGQESVVRRCTGEFACPFQRVEHLRHFVSRRAFDIEGLGEKQLQAFFEEGWITEPADIFKLARDAEKLAVLREREGYGETSVANLVKGIEARRTIGMDRMIYGLGARDIGETTSTVLARNFDRFEDLQAAAEAAARALPGETYLELSTAPGVGPKALDMLVEAGKGGVVADPWPQTDDLELKIGHAVPKLTKPARAALAQRYGTWDAFADGLVAAASGAPGDDYLHLAAIDGVGPVAAQSLARFFAEDHNRQKVANLVAELDIQPVAKPKTDTAVAGKTIVFTGSLEKMTRDEAKAQAEGLGAKVASSVSKKTDLVVAGPGAGSKLKTATDLGIQVMTEDEWLELVAG</sequence>
<dbReference type="EC" id="6.5.1.2" evidence="1"/>
<dbReference type="EMBL" id="AE005673">
    <property type="protein sequence ID" value="AAK23501.1"/>
    <property type="molecule type" value="Genomic_DNA"/>
</dbReference>
<dbReference type="PIR" id="A87438">
    <property type="entry name" value="A87438"/>
</dbReference>
<dbReference type="RefSeq" id="NP_420333.1">
    <property type="nucleotide sequence ID" value="NC_002696.2"/>
</dbReference>
<dbReference type="RefSeq" id="WP_010919396.1">
    <property type="nucleotide sequence ID" value="NC_002696.2"/>
</dbReference>
<dbReference type="SMR" id="Q9A842"/>
<dbReference type="STRING" id="190650.CC_1522"/>
<dbReference type="EnsemblBacteria" id="AAK23501">
    <property type="protein sequence ID" value="AAK23501"/>
    <property type="gene ID" value="CC_1522"/>
</dbReference>
<dbReference type="KEGG" id="ccr:CC_1522"/>
<dbReference type="PATRIC" id="fig|190650.5.peg.1550"/>
<dbReference type="eggNOG" id="COG0272">
    <property type="taxonomic scope" value="Bacteria"/>
</dbReference>
<dbReference type="HOGENOM" id="CLU_007764_2_1_5"/>
<dbReference type="BioCyc" id="CAULO:CC1522-MONOMER"/>
<dbReference type="Proteomes" id="UP000001816">
    <property type="component" value="Chromosome"/>
</dbReference>
<dbReference type="GO" id="GO:0005829">
    <property type="term" value="C:cytosol"/>
    <property type="evidence" value="ECO:0007669"/>
    <property type="project" value="TreeGrafter"/>
</dbReference>
<dbReference type="GO" id="GO:0003911">
    <property type="term" value="F:DNA ligase (NAD+) activity"/>
    <property type="evidence" value="ECO:0007669"/>
    <property type="project" value="UniProtKB-UniRule"/>
</dbReference>
<dbReference type="GO" id="GO:0046872">
    <property type="term" value="F:metal ion binding"/>
    <property type="evidence" value="ECO:0007669"/>
    <property type="project" value="UniProtKB-KW"/>
</dbReference>
<dbReference type="GO" id="GO:0006281">
    <property type="term" value="P:DNA repair"/>
    <property type="evidence" value="ECO:0007669"/>
    <property type="project" value="UniProtKB-KW"/>
</dbReference>
<dbReference type="GO" id="GO:0006260">
    <property type="term" value="P:DNA replication"/>
    <property type="evidence" value="ECO:0007669"/>
    <property type="project" value="UniProtKB-KW"/>
</dbReference>
<dbReference type="CDD" id="cd17748">
    <property type="entry name" value="BRCT_DNA_ligase_like"/>
    <property type="match status" value="1"/>
</dbReference>
<dbReference type="CDD" id="cd00114">
    <property type="entry name" value="LIGANc"/>
    <property type="match status" value="1"/>
</dbReference>
<dbReference type="FunFam" id="1.10.150.20:FF:000007">
    <property type="entry name" value="DNA ligase"/>
    <property type="match status" value="1"/>
</dbReference>
<dbReference type="FunFam" id="2.40.50.140:FF:000012">
    <property type="entry name" value="DNA ligase"/>
    <property type="match status" value="1"/>
</dbReference>
<dbReference type="FunFam" id="3.30.470.30:FF:000001">
    <property type="entry name" value="DNA ligase"/>
    <property type="match status" value="1"/>
</dbReference>
<dbReference type="Gene3D" id="1.10.150.20">
    <property type="entry name" value="5' to 3' exonuclease, C-terminal subdomain"/>
    <property type="match status" value="3"/>
</dbReference>
<dbReference type="Gene3D" id="3.40.50.10190">
    <property type="entry name" value="BRCT domain"/>
    <property type="match status" value="1"/>
</dbReference>
<dbReference type="Gene3D" id="3.30.470.30">
    <property type="entry name" value="DNA ligase/mRNA capping enzyme"/>
    <property type="match status" value="1"/>
</dbReference>
<dbReference type="Gene3D" id="1.10.287.610">
    <property type="entry name" value="Helix hairpin bin"/>
    <property type="match status" value="1"/>
</dbReference>
<dbReference type="Gene3D" id="2.40.50.140">
    <property type="entry name" value="Nucleic acid-binding proteins"/>
    <property type="match status" value="1"/>
</dbReference>
<dbReference type="HAMAP" id="MF_01588">
    <property type="entry name" value="DNA_ligase_A"/>
    <property type="match status" value="1"/>
</dbReference>
<dbReference type="InterPro" id="IPR001357">
    <property type="entry name" value="BRCT_dom"/>
</dbReference>
<dbReference type="InterPro" id="IPR036420">
    <property type="entry name" value="BRCT_dom_sf"/>
</dbReference>
<dbReference type="InterPro" id="IPR001679">
    <property type="entry name" value="DNA_ligase"/>
</dbReference>
<dbReference type="InterPro" id="IPR018239">
    <property type="entry name" value="DNA_ligase_AS"/>
</dbReference>
<dbReference type="InterPro" id="IPR033136">
    <property type="entry name" value="DNA_ligase_CS"/>
</dbReference>
<dbReference type="InterPro" id="IPR013839">
    <property type="entry name" value="DNAligase_adenylation"/>
</dbReference>
<dbReference type="InterPro" id="IPR013840">
    <property type="entry name" value="DNAligase_N"/>
</dbReference>
<dbReference type="InterPro" id="IPR012340">
    <property type="entry name" value="NA-bd_OB-fold"/>
</dbReference>
<dbReference type="InterPro" id="IPR004150">
    <property type="entry name" value="NAD_DNA_ligase_OB"/>
</dbReference>
<dbReference type="InterPro" id="IPR010994">
    <property type="entry name" value="RuvA_2-like"/>
</dbReference>
<dbReference type="NCBIfam" id="TIGR00575">
    <property type="entry name" value="dnlj"/>
    <property type="match status" value="1"/>
</dbReference>
<dbReference type="NCBIfam" id="NF005932">
    <property type="entry name" value="PRK07956.1"/>
    <property type="match status" value="1"/>
</dbReference>
<dbReference type="PANTHER" id="PTHR23389">
    <property type="entry name" value="CHROMOSOME TRANSMISSION FIDELITY FACTOR 18"/>
    <property type="match status" value="1"/>
</dbReference>
<dbReference type="PANTHER" id="PTHR23389:SF9">
    <property type="entry name" value="DNA LIGASE"/>
    <property type="match status" value="1"/>
</dbReference>
<dbReference type="Pfam" id="PF00533">
    <property type="entry name" value="BRCT"/>
    <property type="match status" value="1"/>
</dbReference>
<dbReference type="Pfam" id="PF01653">
    <property type="entry name" value="DNA_ligase_aden"/>
    <property type="match status" value="1"/>
</dbReference>
<dbReference type="Pfam" id="PF03120">
    <property type="entry name" value="DNA_ligase_OB"/>
    <property type="match status" value="1"/>
</dbReference>
<dbReference type="PIRSF" id="PIRSF001604">
    <property type="entry name" value="LigA"/>
    <property type="match status" value="1"/>
</dbReference>
<dbReference type="SMART" id="SM00292">
    <property type="entry name" value="BRCT"/>
    <property type="match status" value="1"/>
</dbReference>
<dbReference type="SMART" id="SM00532">
    <property type="entry name" value="LIGANc"/>
    <property type="match status" value="1"/>
</dbReference>
<dbReference type="SUPFAM" id="SSF52113">
    <property type="entry name" value="BRCT domain"/>
    <property type="match status" value="1"/>
</dbReference>
<dbReference type="SUPFAM" id="SSF56091">
    <property type="entry name" value="DNA ligase/mRNA capping enzyme, catalytic domain"/>
    <property type="match status" value="1"/>
</dbReference>
<dbReference type="SUPFAM" id="SSF50249">
    <property type="entry name" value="Nucleic acid-binding proteins"/>
    <property type="match status" value="1"/>
</dbReference>
<dbReference type="SUPFAM" id="SSF47781">
    <property type="entry name" value="RuvA domain 2-like"/>
    <property type="match status" value="2"/>
</dbReference>
<dbReference type="PROSITE" id="PS50172">
    <property type="entry name" value="BRCT"/>
    <property type="match status" value="1"/>
</dbReference>
<dbReference type="PROSITE" id="PS01055">
    <property type="entry name" value="DNA_LIGASE_N1"/>
    <property type="match status" value="1"/>
</dbReference>
<dbReference type="PROSITE" id="PS01056">
    <property type="entry name" value="DNA_LIGASE_N2"/>
    <property type="match status" value="1"/>
</dbReference>
<gene>
    <name evidence="1" type="primary">ligA</name>
    <name type="ordered locus">CC_1522</name>
</gene>
<accession>Q9A842</accession>
<comment type="function">
    <text evidence="1">DNA ligase that catalyzes the formation of phosphodiester linkages between 5'-phosphoryl and 3'-hydroxyl groups in double-stranded DNA using NAD as a coenzyme and as the energy source for the reaction. It is essential for DNA replication and repair of damaged DNA.</text>
</comment>
<comment type="catalytic activity">
    <reaction evidence="1">
        <text>NAD(+) + (deoxyribonucleotide)n-3'-hydroxyl + 5'-phospho-(deoxyribonucleotide)m = (deoxyribonucleotide)n+m + AMP + beta-nicotinamide D-nucleotide.</text>
        <dbReference type="EC" id="6.5.1.2"/>
    </reaction>
</comment>
<comment type="cofactor">
    <cofactor evidence="1">
        <name>Mg(2+)</name>
        <dbReference type="ChEBI" id="CHEBI:18420"/>
    </cofactor>
    <cofactor evidence="1">
        <name>Mn(2+)</name>
        <dbReference type="ChEBI" id="CHEBI:29035"/>
    </cofactor>
</comment>
<comment type="similarity">
    <text evidence="1">Belongs to the NAD-dependent DNA ligase family. LigA subfamily.</text>
</comment>
<proteinExistence type="inferred from homology"/>
<evidence type="ECO:0000255" key="1">
    <source>
        <dbReference type="HAMAP-Rule" id="MF_01588"/>
    </source>
</evidence>
<reference key="1">
    <citation type="journal article" date="2001" name="Proc. Natl. Acad. Sci. U.S.A.">
        <title>Complete genome sequence of Caulobacter crescentus.</title>
        <authorList>
            <person name="Nierman W.C."/>
            <person name="Feldblyum T.V."/>
            <person name="Laub M.T."/>
            <person name="Paulsen I.T."/>
            <person name="Nelson K.E."/>
            <person name="Eisen J.A."/>
            <person name="Heidelberg J.F."/>
            <person name="Alley M.R.K."/>
            <person name="Ohta N."/>
            <person name="Maddock J.R."/>
            <person name="Potocka I."/>
            <person name="Nelson W.C."/>
            <person name="Newton A."/>
            <person name="Stephens C."/>
            <person name="Phadke N.D."/>
            <person name="Ely B."/>
            <person name="DeBoy R.T."/>
            <person name="Dodson R.J."/>
            <person name="Durkin A.S."/>
            <person name="Gwinn M.L."/>
            <person name="Haft D.H."/>
            <person name="Kolonay J.F."/>
            <person name="Smit J."/>
            <person name="Craven M.B."/>
            <person name="Khouri H.M."/>
            <person name="Shetty J."/>
            <person name="Berry K.J."/>
            <person name="Utterback T.R."/>
            <person name="Tran K."/>
            <person name="Wolf A.M."/>
            <person name="Vamathevan J.J."/>
            <person name="Ermolaeva M.D."/>
            <person name="White O."/>
            <person name="Salzberg S.L."/>
            <person name="Venter J.C."/>
            <person name="Shapiro L."/>
            <person name="Fraser C.M."/>
        </authorList>
    </citation>
    <scope>NUCLEOTIDE SEQUENCE [LARGE SCALE GENOMIC DNA]</scope>
    <source>
        <strain>ATCC 19089 / CIP 103742 / CB 15</strain>
    </source>
</reference>
<feature type="chain" id="PRO_0000313180" description="DNA ligase">
    <location>
        <begin position="1"/>
        <end position="783"/>
    </location>
</feature>
<feature type="domain" description="BRCT" evidence="1">
    <location>
        <begin position="705"/>
        <end position="783"/>
    </location>
</feature>
<feature type="active site" description="N6-AMP-lysine intermediate" evidence="1">
    <location>
        <position position="127"/>
    </location>
</feature>
<feature type="binding site" evidence="1">
    <location>
        <begin position="42"/>
        <end position="46"/>
    </location>
    <ligand>
        <name>NAD(+)</name>
        <dbReference type="ChEBI" id="CHEBI:57540"/>
    </ligand>
</feature>
<feature type="binding site" evidence="1">
    <location>
        <begin position="91"/>
        <end position="92"/>
    </location>
    <ligand>
        <name>NAD(+)</name>
        <dbReference type="ChEBI" id="CHEBI:57540"/>
    </ligand>
</feature>
<feature type="binding site" evidence="1">
    <location>
        <position position="125"/>
    </location>
    <ligand>
        <name>NAD(+)</name>
        <dbReference type="ChEBI" id="CHEBI:57540"/>
    </ligand>
</feature>
<feature type="binding site" evidence="1">
    <location>
        <position position="148"/>
    </location>
    <ligand>
        <name>NAD(+)</name>
        <dbReference type="ChEBI" id="CHEBI:57540"/>
    </ligand>
</feature>
<feature type="binding site" evidence="1">
    <location>
        <position position="185"/>
    </location>
    <ligand>
        <name>NAD(+)</name>
        <dbReference type="ChEBI" id="CHEBI:57540"/>
    </ligand>
</feature>
<feature type="binding site" evidence="1">
    <location>
        <position position="302"/>
    </location>
    <ligand>
        <name>NAD(+)</name>
        <dbReference type="ChEBI" id="CHEBI:57540"/>
    </ligand>
</feature>
<feature type="binding site" evidence="1">
    <location>
        <position position="326"/>
    </location>
    <ligand>
        <name>NAD(+)</name>
        <dbReference type="ChEBI" id="CHEBI:57540"/>
    </ligand>
</feature>
<feature type="binding site" evidence="1">
    <location>
        <position position="421"/>
    </location>
    <ligand>
        <name>Zn(2+)</name>
        <dbReference type="ChEBI" id="CHEBI:29105"/>
    </ligand>
</feature>
<feature type="binding site" evidence="1">
    <location>
        <position position="423"/>
    </location>
    <ligand>
        <name>Zn(2+)</name>
        <dbReference type="ChEBI" id="CHEBI:29105"/>
    </ligand>
</feature>
<feature type="binding site" evidence="1">
    <location>
        <position position="445"/>
    </location>
    <ligand>
        <name>Zn(2+)</name>
        <dbReference type="ChEBI" id="CHEBI:29105"/>
    </ligand>
</feature>
<feature type="binding site" evidence="1">
    <location>
        <position position="451"/>
    </location>
    <ligand>
        <name>Zn(2+)</name>
        <dbReference type="ChEBI" id="CHEBI:29105"/>
    </ligand>
</feature>
<protein>
    <recommendedName>
        <fullName evidence="1">DNA ligase</fullName>
        <ecNumber evidence="1">6.5.1.2</ecNumber>
    </recommendedName>
    <alternativeName>
        <fullName evidence="1">Polydeoxyribonucleotide synthase [NAD(+)]</fullName>
    </alternativeName>
</protein>